<evidence type="ECO:0000255" key="1">
    <source>
        <dbReference type="HAMAP-Rule" id="MF_00022"/>
    </source>
</evidence>
<organism>
    <name type="scientific">Sulfurovum sp. (strain NBC37-1)</name>
    <dbReference type="NCBI Taxonomy" id="387093"/>
    <lineage>
        <taxon>Bacteria</taxon>
        <taxon>Pseudomonadati</taxon>
        <taxon>Campylobacterota</taxon>
        <taxon>Epsilonproteobacteria</taxon>
        <taxon>Campylobacterales</taxon>
        <taxon>Sulfurovaceae</taxon>
        <taxon>Sulfurovum</taxon>
    </lineage>
</organism>
<accession>A6Q9D4</accession>
<dbReference type="EC" id="6.1.1.17" evidence="1"/>
<dbReference type="EMBL" id="AP009179">
    <property type="protein sequence ID" value="BAF72093.1"/>
    <property type="molecule type" value="Genomic_DNA"/>
</dbReference>
<dbReference type="RefSeq" id="WP_011980826.1">
    <property type="nucleotide sequence ID" value="NC_009663.1"/>
</dbReference>
<dbReference type="SMR" id="A6Q9D4"/>
<dbReference type="STRING" id="387093.SUN_1138"/>
<dbReference type="KEGG" id="sun:SUN_1138"/>
<dbReference type="eggNOG" id="COG0008">
    <property type="taxonomic scope" value="Bacteria"/>
</dbReference>
<dbReference type="HOGENOM" id="CLU_015768_6_0_7"/>
<dbReference type="OrthoDB" id="9807503at2"/>
<dbReference type="Proteomes" id="UP000006378">
    <property type="component" value="Chromosome"/>
</dbReference>
<dbReference type="GO" id="GO:0005829">
    <property type="term" value="C:cytosol"/>
    <property type="evidence" value="ECO:0007669"/>
    <property type="project" value="TreeGrafter"/>
</dbReference>
<dbReference type="GO" id="GO:0005524">
    <property type="term" value="F:ATP binding"/>
    <property type="evidence" value="ECO:0007669"/>
    <property type="project" value="UniProtKB-UniRule"/>
</dbReference>
<dbReference type="GO" id="GO:0004818">
    <property type="term" value="F:glutamate-tRNA ligase activity"/>
    <property type="evidence" value="ECO:0007669"/>
    <property type="project" value="UniProtKB-UniRule"/>
</dbReference>
<dbReference type="GO" id="GO:0000049">
    <property type="term" value="F:tRNA binding"/>
    <property type="evidence" value="ECO:0007669"/>
    <property type="project" value="InterPro"/>
</dbReference>
<dbReference type="GO" id="GO:0006424">
    <property type="term" value="P:glutamyl-tRNA aminoacylation"/>
    <property type="evidence" value="ECO:0007669"/>
    <property type="project" value="UniProtKB-UniRule"/>
</dbReference>
<dbReference type="Gene3D" id="1.10.10.350">
    <property type="match status" value="1"/>
</dbReference>
<dbReference type="Gene3D" id="3.40.50.620">
    <property type="entry name" value="HUPs"/>
    <property type="match status" value="1"/>
</dbReference>
<dbReference type="HAMAP" id="MF_00022">
    <property type="entry name" value="Glu_tRNA_synth_type1"/>
    <property type="match status" value="1"/>
</dbReference>
<dbReference type="InterPro" id="IPR020751">
    <property type="entry name" value="aa-tRNA-synth_I_codon-bd_sub2"/>
</dbReference>
<dbReference type="InterPro" id="IPR008925">
    <property type="entry name" value="aa_tRNA-synth_I_cd-bd_sf"/>
</dbReference>
<dbReference type="InterPro" id="IPR004527">
    <property type="entry name" value="Glu-tRNA-ligase_bac/mito"/>
</dbReference>
<dbReference type="InterPro" id="IPR000924">
    <property type="entry name" value="Glu/Gln-tRNA-synth"/>
</dbReference>
<dbReference type="InterPro" id="IPR020058">
    <property type="entry name" value="Glu/Gln-tRNA-synth_Ib_cat-dom"/>
</dbReference>
<dbReference type="InterPro" id="IPR049940">
    <property type="entry name" value="GluQ/Sye"/>
</dbReference>
<dbReference type="InterPro" id="IPR014729">
    <property type="entry name" value="Rossmann-like_a/b/a_fold"/>
</dbReference>
<dbReference type="NCBIfam" id="TIGR00464">
    <property type="entry name" value="gltX_bact"/>
    <property type="match status" value="1"/>
</dbReference>
<dbReference type="PANTHER" id="PTHR43311">
    <property type="entry name" value="GLUTAMATE--TRNA LIGASE"/>
    <property type="match status" value="1"/>
</dbReference>
<dbReference type="PANTHER" id="PTHR43311:SF2">
    <property type="entry name" value="GLUTAMATE--TRNA LIGASE, MITOCHONDRIAL-RELATED"/>
    <property type="match status" value="1"/>
</dbReference>
<dbReference type="Pfam" id="PF00749">
    <property type="entry name" value="tRNA-synt_1c"/>
    <property type="match status" value="1"/>
</dbReference>
<dbReference type="PRINTS" id="PR00987">
    <property type="entry name" value="TRNASYNTHGLU"/>
</dbReference>
<dbReference type="SUPFAM" id="SSF48163">
    <property type="entry name" value="An anticodon-binding domain of class I aminoacyl-tRNA synthetases"/>
    <property type="match status" value="1"/>
</dbReference>
<dbReference type="SUPFAM" id="SSF52374">
    <property type="entry name" value="Nucleotidylyl transferase"/>
    <property type="match status" value="1"/>
</dbReference>
<protein>
    <recommendedName>
        <fullName evidence="1">Glutamate--tRNA ligase 2</fullName>
        <ecNumber evidence="1">6.1.1.17</ecNumber>
    </recommendedName>
    <alternativeName>
        <fullName evidence="1">Glutamyl-tRNA synthetase 2</fullName>
        <shortName evidence="1">GluRS 2</shortName>
    </alternativeName>
</protein>
<gene>
    <name evidence="1" type="primary">gltX2</name>
    <name type="ordered locus">SUN_1138</name>
</gene>
<sequence length="428" mass="48962">MLRFAPSPTGDMRTEQLRIAIFNYIVAKQKEVNFIVRIEDTDKERNITGKDTEILQILEKFAITHDSVFHQSEHLNIHQTLAIRLLEEGKAFVCTCTPEAPESDKTPSRYNGKCFNVDKEELKRLKEEKIPFVIRLKKPEHDMIIHDLYKGETVTSADEVDSFVILRADATPTENFASACDDMLSGIDFIIRSEEHLDETAKQEYVKKQLGYEEETTYAHLPVILNEEGQKMDEKDDAFTVKWLFEEGYIPDAIANYLISLGNTTPTDIFTLPEAIEWFNITKLSGSPVKFNIEELRLLNRKHLEKMDDKRLSSLFGFADADIGKLAKLYINEAATINELDARIKAIFSPKDFDGKWGEQMRMLEKIIAEAPMFATFEAFESHLMKESGLSGEYFSKPLRVLLTGAEQGPELSDIYPYIKSYLLEVAS</sequence>
<comment type="function">
    <text evidence="1">Catalyzes the attachment of glutamate to tRNA(Glu) in a two-step reaction: glutamate is first activated by ATP to form Glu-AMP and then transferred to the acceptor end of tRNA(Glu).</text>
</comment>
<comment type="catalytic activity">
    <reaction evidence="1">
        <text>tRNA(Glu) + L-glutamate + ATP = L-glutamyl-tRNA(Glu) + AMP + diphosphate</text>
        <dbReference type="Rhea" id="RHEA:23540"/>
        <dbReference type="Rhea" id="RHEA-COMP:9663"/>
        <dbReference type="Rhea" id="RHEA-COMP:9680"/>
        <dbReference type="ChEBI" id="CHEBI:29985"/>
        <dbReference type="ChEBI" id="CHEBI:30616"/>
        <dbReference type="ChEBI" id="CHEBI:33019"/>
        <dbReference type="ChEBI" id="CHEBI:78442"/>
        <dbReference type="ChEBI" id="CHEBI:78520"/>
        <dbReference type="ChEBI" id="CHEBI:456215"/>
        <dbReference type="EC" id="6.1.1.17"/>
    </reaction>
</comment>
<comment type="subunit">
    <text evidence="1">Monomer.</text>
</comment>
<comment type="subcellular location">
    <subcellularLocation>
        <location evidence="1">Cytoplasm</location>
    </subcellularLocation>
</comment>
<comment type="similarity">
    <text evidence="1">Belongs to the class-I aminoacyl-tRNA synthetase family. Glutamate--tRNA ligase type 1 subfamily.</text>
</comment>
<keyword id="KW-0030">Aminoacyl-tRNA synthetase</keyword>
<keyword id="KW-0067">ATP-binding</keyword>
<keyword id="KW-0963">Cytoplasm</keyword>
<keyword id="KW-0436">Ligase</keyword>
<keyword id="KW-0547">Nucleotide-binding</keyword>
<keyword id="KW-0648">Protein biosynthesis</keyword>
<reference key="1">
    <citation type="journal article" date="2007" name="Proc. Natl. Acad. Sci. U.S.A.">
        <title>Deep-sea vent epsilon-proteobacterial genomes provide insights into emergence of pathogens.</title>
        <authorList>
            <person name="Nakagawa S."/>
            <person name="Takaki Y."/>
            <person name="Shimamura S."/>
            <person name="Reysenbach A.-L."/>
            <person name="Takai K."/>
            <person name="Horikoshi K."/>
        </authorList>
    </citation>
    <scope>NUCLEOTIDE SEQUENCE [LARGE SCALE GENOMIC DNA]</scope>
    <source>
        <strain>NBC37-1</strain>
    </source>
</reference>
<feature type="chain" id="PRO_0000367778" description="Glutamate--tRNA ligase 2">
    <location>
        <begin position="1"/>
        <end position="428"/>
    </location>
</feature>
<feature type="short sequence motif" description="'HIGH' region" evidence="1">
    <location>
        <begin position="6"/>
        <end position="16"/>
    </location>
</feature>
<name>SYE2_SULNB</name>
<proteinExistence type="inferred from homology"/>